<evidence type="ECO:0000250" key="1">
    <source>
        <dbReference type="UniProtKB" id="G3UXB3"/>
    </source>
</evidence>
<evidence type="ECO:0000250" key="2">
    <source>
        <dbReference type="UniProtKB" id="Q15270"/>
    </source>
</evidence>
<evidence type="ECO:0000255" key="3">
    <source>
        <dbReference type="PROSITE-ProRule" id="PRU00108"/>
    </source>
</evidence>
<evidence type="ECO:0000256" key="4">
    <source>
        <dbReference type="SAM" id="MobiDB-lite"/>
    </source>
</evidence>
<evidence type="ECO:0000269" key="5">
    <source>
    </source>
</evidence>
<evidence type="ECO:0000303" key="6">
    <source>
    </source>
</evidence>
<evidence type="ECO:0000305" key="7"/>
<evidence type="ECO:0000312" key="8">
    <source>
        <dbReference type="ZFIN" id="ZDB-GENE-040615-2"/>
    </source>
</evidence>
<proteinExistence type="evidence at transcript level"/>
<gene>
    <name evidence="8" type="primary">nkx1.2lb</name>
    <name type="synonym">nkx1.1</name>
    <name evidence="6" type="synonym">sax2</name>
</gene>
<keyword id="KW-0238">DNA-binding</keyword>
<keyword id="KW-0371">Homeobox</keyword>
<keyword id="KW-0539">Nucleus</keyword>
<keyword id="KW-1185">Reference proteome</keyword>
<accession>Q75W95</accession>
<dbReference type="EMBL" id="BC129149">
    <property type="protein sequence ID" value="AAI29150.1"/>
    <property type="molecule type" value="mRNA"/>
</dbReference>
<dbReference type="EMBL" id="AB121758">
    <property type="protein sequence ID" value="BAD15087.1"/>
    <property type="molecule type" value="mRNA"/>
</dbReference>
<dbReference type="RefSeq" id="NP_998713.1">
    <property type="nucleotide sequence ID" value="NM_213548.1"/>
</dbReference>
<dbReference type="SMR" id="Q75W95"/>
<dbReference type="FunCoup" id="Q75W95">
    <property type="interactions" value="2"/>
</dbReference>
<dbReference type="GeneID" id="407077"/>
<dbReference type="KEGG" id="dre:407077"/>
<dbReference type="AGR" id="ZFIN:ZDB-GENE-040615-2"/>
<dbReference type="CTD" id="407077"/>
<dbReference type="ZFIN" id="ZDB-GENE-040615-2">
    <property type="gene designation" value="nkx1.2lb"/>
</dbReference>
<dbReference type="InParanoid" id="Q75W95"/>
<dbReference type="OrthoDB" id="6159439at2759"/>
<dbReference type="PhylomeDB" id="Q75W95"/>
<dbReference type="TreeFam" id="TF316128"/>
<dbReference type="PRO" id="PR:Q75W95"/>
<dbReference type="Proteomes" id="UP000000437">
    <property type="component" value="Chromosome 14"/>
</dbReference>
<dbReference type="GO" id="GO:0005634">
    <property type="term" value="C:nucleus"/>
    <property type="evidence" value="ECO:0000318"/>
    <property type="project" value="GO_Central"/>
</dbReference>
<dbReference type="GO" id="GO:0000981">
    <property type="term" value="F:DNA-binding transcription factor activity, RNA polymerase II-specific"/>
    <property type="evidence" value="ECO:0000318"/>
    <property type="project" value="GO_Central"/>
</dbReference>
<dbReference type="GO" id="GO:0000978">
    <property type="term" value="F:RNA polymerase II cis-regulatory region sequence-specific DNA binding"/>
    <property type="evidence" value="ECO:0000318"/>
    <property type="project" value="GO_Central"/>
</dbReference>
<dbReference type="GO" id="GO:0030154">
    <property type="term" value="P:cell differentiation"/>
    <property type="evidence" value="ECO:0000318"/>
    <property type="project" value="GO_Central"/>
</dbReference>
<dbReference type="GO" id="GO:0006357">
    <property type="term" value="P:regulation of transcription by RNA polymerase II"/>
    <property type="evidence" value="ECO:0000318"/>
    <property type="project" value="GO_Central"/>
</dbReference>
<dbReference type="CDD" id="cd00086">
    <property type="entry name" value="homeodomain"/>
    <property type="match status" value="1"/>
</dbReference>
<dbReference type="FunFam" id="1.10.10.60:FF:000294">
    <property type="entry name" value="NK1 transcription factor-related protein 1"/>
    <property type="match status" value="1"/>
</dbReference>
<dbReference type="Gene3D" id="1.10.10.60">
    <property type="entry name" value="Homeodomain-like"/>
    <property type="match status" value="1"/>
</dbReference>
<dbReference type="InterPro" id="IPR001356">
    <property type="entry name" value="HD"/>
</dbReference>
<dbReference type="InterPro" id="IPR020479">
    <property type="entry name" value="HD_metazoa"/>
</dbReference>
<dbReference type="InterPro" id="IPR017970">
    <property type="entry name" value="Homeobox_CS"/>
</dbReference>
<dbReference type="InterPro" id="IPR050394">
    <property type="entry name" value="Homeobox_NK-like"/>
</dbReference>
<dbReference type="InterPro" id="IPR009057">
    <property type="entry name" value="Homeodomain-like_sf"/>
</dbReference>
<dbReference type="PANTHER" id="PTHR24340">
    <property type="entry name" value="HOMEOBOX PROTEIN NKX"/>
    <property type="match status" value="1"/>
</dbReference>
<dbReference type="PANTHER" id="PTHR24340:SF26">
    <property type="entry name" value="NK1 TRANSCRIPTION FACTOR-RELATED PROTEIN 1"/>
    <property type="match status" value="1"/>
</dbReference>
<dbReference type="Pfam" id="PF00046">
    <property type="entry name" value="Homeodomain"/>
    <property type="match status" value="1"/>
</dbReference>
<dbReference type="PRINTS" id="PR00024">
    <property type="entry name" value="HOMEOBOX"/>
</dbReference>
<dbReference type="SMART" id="SM00389">
    <property type="entry name" value="HOX"/>
    <property type="match status" value="1"/>
</dbReference>
<dbReference type="SUPFAM" id="SSF46689">
    <property type="entry name" value="Homeodomain-like"/>
    <property type="match status" value="1"/>
</dbReference>
<dbReference type="PROSITE" id="PS00027">
    <property type="entry name" value="HOMEOBOX_1"/>
    <property type="match status" value="1"/>
</dbReference>
<dbReference type="PROSITE" id="PS50071">
    <property type="entry name" value="HOMEOBOX_2"/>
    <property type="match status" value="1"/>
</dbReference>
<name>NKX11_DANRE</name>
<comment type="function">
    <text evidence="1">May participate in the energy homeostasis regulation.</text>
</comment>
<comment type="subcellular location">
    <subcellularLocation>
        <location evidence="3">Nucleus</location>
    </subcellularLocation>
</comment>
<comment type="developmental stage">
    <text evidence="5">First detected at the anterior position of the embryo at the first somite stage. From the late segmentation and pharyngula periods, expressed in a region ventral to the forebrain, and in the midbrain, hindbrain, and spinal cord. Expressed in the prospective extraocular muscles, mesencephalic neurons residing along the tract of the posterior commissure and interneurons in the spinal cord.</text>
</comment>
<comment type="similarity">
    <text evidence="7">Belongs to the NK-1 homeobox family.</text>
</comment>
<sequence length="373" mass="40259">MNREKVQVGDSVAPAGAGVIVVAPQDGMDDKRLAAGELPVFNCVGGRDALPAESRETSPRHEPVPAGAPPTVHRTTSFSVLDILDPNKFTSKRQTPNRTGCEFAFGAENRSDDSNHTIEHKSYQEDYDCKKTSGILKDGFVFRSDECESDFTRGNQSDSELQEDLCSEESSALTGNNDAEFGQHEDDDSISKSPDGQQTQQSSSNGQNHQVKPKRKRSGSDSKSGKPRRARTAFTYEQLVALENKFKSTRYLSVCERLNLALSLSLTETQVKIWFQNRRTKWKKQNPGADTSAPTSGGGGGNGPSNGLGGLSPLSPSPPMSGHLSMHTSYPGHTPGGLVCTTQLPFLPGHAVLSPFMLGSQTYGAPTFYAPHL</sequence>
<feature type="chain" id="PRO_0000452745" description="NK1 transcription factor-related protein 1">
    <location>
        <begin position="1"/>
        <end position="373"/>
    </location>
</feature>
<feature type="DNA-binding region" description="Homeobox" evidence="3">
    <location>
        <begin position="227"/>
        <end position="286"/>
    </location>
</feature>
<feature type="region of interest" description="Disordered" evidence="4">
    <location>
        <begin position="49"/>
        <end position="74"/>
    </location>
</feature>
<feature type="region of interest" description="Disordered" evidence="4">
    <location>
        <begin position="149"/>
        <end position="231"/>
    </location>
</feature>
<feature type="region of interest" description="Disordered" evidence="4">
    <location>
        <begin position="281"/>
        <end position="328"/>
    </location>
</feature>
<feature type="compositionally biased region" description="Basic and acidic residues" evidence="4">
    <location>
        <begin position="53"/>
        <end position="63"/>
    </location>
</feature>
<feature type="compositionally biased region" description="Polar residues" evidence="4">
    <location>
        <begin position="168"/>
        <end position="177"/>
    </location>
</feature>
<feature type="compositionally biased region" description="Low complexity" evidence="4">
    <location>
        <begin position="196"/>
        <end position="210"/>
    </location>
</feature>
<feature type="compositionally biased region" description="Gly residues" evidence="4">
    <location>
        <begin position="296"/>
        <end position="310"/>
    </location>
</feature>
<organism>
    <name type="scientific">Danio rerio</name>
    <name type="common">Zebrafish</name>
    <name type="synonym">Brachydanio rerio</name>
    <dbReference type="NCBI Taxonomy" id="7955"/>
    <lineage>
        <taxon>Eukaryota</taxon>
        <taxon>Metazoa</taxon>
        <taxon>Chordata</taxon>
        <taxon>Craniata</taxon>
        <taxon>Vertebrata</taxon>
        <taxon>Euteleostomi</taxon>
        <taxon>Actinopterygii</taxon>
        <taxon>Neopterygii</taxon>
        <taxon>Teleostei</taxon>
        <taxon>Ostariophysi</taxon>
        <taxon>Cypriniformes</taxon>
        <taxon>Danionidae</taxon>
        <taxon>Danioninae</taxon>
        <taxon>Danio</taxon>
    </lineage>
</organism>
<reference key="1">
    <citation type="journal article" date="2004" name="Gene Expr. Patterns">
        <title>Expression of sax1/nkx1.2 and sax2/nkx1.1 in zebrafish.</title>
        <authorList>
            <person name="Bae Y.K."/>
            <person name="Shimizu T."/>
            <person name="Muraoka O."/>
            <person name="Yabe T."/>
            <person name="Hirata T."/>
            <person name="Nojima H."/>
            <person name="Hirano T."/>
            <person name="Hibi M."/>
        </authorList>
    </citation>
    <scope>NUCLEOTIDE SEQUENCE [MRNA]</scope>
    <scope>DEVELOPMENTAL STAGE</scope>
</reference>
<reference key="2">
    <citation type="submission" date="2006-12" db="EMBL/GenBank/DDBJ databases">
        <authorList>
            <consortium name="NIH - Zebrafish Gene Collection (ZGC) project"/>
        </authorList>
    </citation>
    <scope>NUCLEOTIDE SEQUENCE [LARGE SCALE MRNA]</scope>
    <source>
        <tissue>Embryo</tissue>
    </source>
</reference>
<protein>
    <recommendedName>
        <fullName evidence="2">NK1 transcription factor-related protein 1</fullName>
    </recommendedName>
    <alternativeName>
        <fullName evidence="6">Homeodomain protein Sax2</fullName>
    </alternativeName>
    <alternativeName>
        <fullName>NK1 transcription factor related 2-like,b</fullName>
    </alternativeName>
</protein>